<comment type="function">
    <text evidence="1">Catalyzes the attachment of threonine to tRNA(Thr) in a two-step reaction: L-threonine is first activated by ATP to form Thr-AMP and then transferred to the acceptor end of tRNA(Thr). Also edits incorrectly charged L-seryl-tRNA(Thr).</text>
</comment>
<comment type="catalytic activity">
    <reaction evidence="1">
        <text>tRNA(Thr) + L-threonine + ATP = L-threonyl-tRNA(Thr) + AMP + diphosphate + H(+)</text>
        <dbReference type="Rhea" id="RHEA:24624"/>
        <dbReference type="Rhea" id="RHEA-COMP:9670"/>
        <dbReference type="Rhea" id="RHEA-COMP:9704"/>
        <dbReference type="ChEBI" id="CHEBI:15378"/>
        <dbReference type="ChEBI" id="CHEBI:30616"/>
        <dbReference type="ChEBI" id="CHEBI:33019"/>
        <dbReference type="ChEBI" id="CHEBI:57926"/>
        <dbReference type="ChEBI" id="CHEBI:78442"/>
        <dbReference type="ChEBI" id="CHEBI:78534"/>
        <dbReference type="ChEBI" id="CHEBI:456215"/>
        <dbReference type="EC" id="6.1.1.3"/>
    </reaction>
</comment>
<comment type="cofactor">
    <cofactor evidence="1">
        <name>Zn(2+)</name>
        <dbReference type="ChEBI" id="CHEBI:29105"/>
    </cofactor>
    <text evidence="1">Binds 1 zinc ion per subunit.</text>
</comment>
<comment type="subunit">
    <text evidence="1">Homodimer.</text>
</comment>
<comment type="subcellular location">
    <subcellularLocation>
        <location evidence="1">Cytoplasm</location>
    </subcellularLocation>
</comment>
<comment type="similarity">
    <text evidence="1">Belongs to the class-II aminoacyl-tRNA synthetase family.</text>
</comment>
<gene>
    <name evidence="1" type="primary">thrS</name>
    <name type="ordered locus">CPF_2631</name>
</gene>
<sequence length="643" mass="73677">MIKITLKDGSIKEVEAGLSIFEIAQSISQGLARNACCGILNGKVEDLRFIVNEDSSLEICTFDSKEGQHAFNHTASHVLAAAVKRLFPQDKLAIGPSIDNGFYYDFDTEKPFSADQLNKLEEEMKKIIKENPEIKRFELPRNEALELMKDEPYKVELINDLPEGEVISFYQIGDFVDLCAGPHLMAVKPIKAVKLLRSTGAYWKGDEKNKMLSRVYGTAFPKKSELDAYLEALEEAKKRDHNKLGRELGIFTTDENVGQGLPLLMPKGARIIQTLQRWIEDEEQRRGYVLTKTPLMAKSDLYKISGHWDHYKDGMFVLGDEEKDSEVFALRPMTCPFQYAIYNSTQHSYRDLPVRFAETSTLFRNESSGEMHGLIRVRQFTLADGHIVCTPEQLEDEFKNTVDLVKYVMETLGIADDITYRFSKWDPNNTEKYINDPEAWENTQNIMREILNHLNIDFTEADDEAAFYGPKLDIQFKNVHGKEDTIITIQIDFALAERFGMYYIDKDGEKKRPYIIHRSSIGCYERTLAMLIEKYAGALPTWIAPVQAKVLPLSDKYADYANEVVEELRRRGVRVEADHRAEKIGYKIREARLERTPYILVVGEKEAENKEVSVRSRKNGEEGAMPLADFVNRIVLEIANREN</sequence>
<accession>Q0TMX8</accession>
<keyword id="KW-0030">Aminoacyl-tRNA synthetase</keyword>
<keyword id="KW-0067">ATP-binding</keyword>
<keyword id="KW-0963">Cytoplasm</keyword>
<keyword id="KW-0436">Ligase</keyword>
<keyword id="KW-0479">Metal-binding</keyword>
<keyword id="KW-0547">Nucleotide-binding</keyword>
<keyword id="KW-0648">Protein biosynthesis</keyword>
<keyword id="KW-0694">RNA-binding</keyword>
<keyword id="KW-0820">tRNA-binding</keyword>
<keyword id="KW-0862">Zinc</keyword>
<dbReference type="EC" id="6.1.1.3" evidence="1"/>
<dbReference type="EMBL" id="CP000246">
    <property type="protein sequence ID" value="ABG84953.1"/>
    <property type="molecule type" value="Genomic_DNA"/>
</dbReference>
<dbReference type="RefSeq" id="WP_003457830.1">
    <property type="nucleotide sequence ID" value="NC_008261.1"/>
</dbReference>
<dbReference type="SMR" id="Q0TMX8"/>
<dbReference type="STRING" id="195103.CPF_2631"/>
<dbReference type="PaxDb" id="195103-CPF_2631"/>
<dbReference type="GeneID" id="93001091"/>
<dbReference type="KEGG" id="cpf:CPF_2631"/>
<dbReference type="eggNOG" id="COG0441">
    <property type="taxonomic scope" value="Bacteria"/>
</dbReference>
<dbReference type="HOGENOM" id="CLU_008554_0_1_9"/>
<dbReference type="Proteomes" id="UP000001823">
    <property type="component" value="Chromosome"/>
</dbReference>
<dbReference type="GO" id="GO:0005737">
    <property type="term" value="C:cytoplasm"/>
    <property type="evidence" value="ECO:0007669"/>
    <property type="project" value="UniProtKB-SubCell"/>
</dbReference>
<dbReference type="GO" id="GO:0005524">
    <property type="term" value="F:ATP binding"/>
    <property type="evidence" value="ECO:0007669"/>
    <property type="project" value="UniProtKB-UniRule"/>
</dbReference>
<dbReference type="GO" id="GO:0140096">
    <property type="term" value="F:catalytic activity, acting on a protein"/>
    <property type="evidence" value="ECO:0007669"/>
    <property type="project" value="UniProtKB-ARBA"/>
</dbReference>
<dbReference type="GO" id="GO:0046872">
    <property type="term" value="F:metal ion binding"/>
    <property type="evidence" value="ECO:0007669"/>
    <property type="project" value="UniProtKB-KW"/>
</dbReference>
<dbReference type="GO" id="GO:0004829">
    <property type="term" value="F:threonine-tRNA ligase activity"/>
    <property type="evidence" value="ECO:0007669"/>
    <property type="project" value="UniProtKB-UniRule"/>
</dbReference>
<dbReference type="GO" id="GO:0016740">
    <property type="term" value="F:transferase activity"/>
    <property type="evidence" value="ECO:0007669"/>
    <property type="project" value="UniProtKB-ARBA"/>
</dbReference>
<dbReference type="GO" id="GO:0000049">
    <property type="term" value="F:tRNA binding"/>
    <property type="evidence" value="ECO:0007669"/>
    <property type="project" value="UniProtKB-KW"/>
</dbReference>
<dbReference type="GO" id="GO:0006435">
    <property type="term" value="P:threonyl-tRNA aminoacylation"/>
    <property type="evidence" value="ECO:0007669"/>
    <property type="project" value="UniProtKB-UniRule"/>
</dbReference>
<dbReference type="CDD" id="cd01667">
    <property type="entry name" value="TGS_ThrRS"/>
    <property type="match status" value="1"/>
</dbReference>
<dbReference type="CDD" id="cd00860">
    <property type="entry name" value="ThrRS_anticodon"/>
    <property type="match status" value="1"/>
</dbReference>
<dbReference type="CDD" id="cd00771">
    <property type="entry name" value="ThrRS_core"/>
    <property type="match status" value="1"/>
</dbReference>
<dbReference type="FunFam" id="3.30.54.20:FF:000002">
    <property type="entry name" value="Threonine--tRNA ligase"/>
    <property type="match status" value="1"/>
</dbReference>
<dbReference type="FunFam" id="3.30.930.10:FF:000002">
    <property type="entry name" value="Threonine--tRNA ligase"/>
    <property type="match status" value="1"/>
</dbReference>
<dbReference type="FunFam" id="3.40.50.800:FF:000001">
    <property type="entry name" value="Threonine--tRNA ligase"/>
    <property type="match status" value="1"/>
</dbReference>
<dbReference type="FunFam" id="3.30.980.10:FF:000005">
    <property type="entry name" value="Threonyl-tRNA synthetase, mitochondrial"/>
    <property type="match status" value="1"/>
</dbReference>
<dbReference type="Gene3D" id="3.10.20.30">
    <property type="match status" value="1"/>
</dbReference>
<dbReference type="Gene3D" id="3.40.50.800">
    <property type="entry name" value="Anticodon-binding domain"/>
    <property type="match status" value="1"/>
</dbReference>
<dbReference type="Gene3D" id="3.30.930.10">
    <property type="entry name" value="Bira Bifunctional Protein, Domain 2"/>
    <property type="match status" value="1"/>
</dbReference>
<dbReference type="Gene3D" id="3.30.980.10">
    <property type="entry name" value="Threonyl-trna Synthetase, Chain A, domain 2"/>
    <property type="match status" value="1"/>
</dbReference>
<dbReference type="HAMAP" id="MF_00184">
    <property type="entry name" value="Thr_tRNA_synth"/>
    <property type="match status" value="1"/>
</dbReference>
<dbReference type="InterPro" id="IPR002314">
    <property type="entry name" value="aa-tRNA-synt_IIb"/>
</dbReference>
<dbReference type="InterPro" id="IPR006195">
    <property type="entry name" value="aa-tRNA-synth_II"/>
</dbReference>
<dbReference type="InterPro" id="IPR045864">
    <property type="entry name" value="aa-tRNA-synth_II/BPL/LPL"/>
</dbReference>
<dbReference type="InterPro" id="IPR004154">
    <property type="entry name" value="Anticodon-bd"/>
</dbReference>
<dbReference type="InterPro" id="IPR036621">
    <property type="entry name" value="Anticodon-bd_dom_sf"/>
</dbReference>
<dbReference type="InterPro" id="IPR012675">
    <property type="entry name" value="Beta-grasp_dom_sf"/>
</dbReference>
<dbReference type="InterPro" id="IPR004095">
    <property type="entry name" value="TGS"/>
</dbReference>
<dbReference type="InterPro" id="IPR012676">
    <property type="entry name" value="TGS-like"/>
</dbReference>
<dbReference type="InterPro" id="IPR002320">
    <property type="entry name" value="Thr-tRNA-ligase_IIa"/>
</dbReference>
<dbReference type="InterPro" id="IPR018163">
    <property type="entry name" value="Thr/Ala-tRNA-synth_IIc_edit"/>
</dbReference>
<dbReference type="InterPro" id="IPR047246">
    <property type="entry name" value="ThrRS_anticodon"/>
</dbReference>
<dbReference type="InterPro" id="IPR033728">
    <property type="entry name" value="ThrRS_core"/>
</dbReference>
<dbReference type="InterPro" id="IPR012947">
    <property type="entry name" value="tRNA_SAD"/>
</dbReference>
<dbReference type="NCBIfam" id="TIGR00418">
    <property type="entry name" value="thrS"/>
    <property type="match status" value="1"/>
</dbReference>
<dbReference type="PANTHER" id="PTHR11451:SF56">
    <property type="entry name" value="THREONINE--TRNA LIGASE 1"/>
    <property type="match status" value="1"/>
</dbReference>
<dbReference type="PANTHER" id="PTHR11451">
    <property type="entry name" value="THREONINE-TRNA LIGASE"/>
    <property type="match status" value="1"/>
</dbReference>
<dbReference type="Pfam" id="PF03129">
    <property type="entry name" value="HGTP_anticodon"/>
    <property type="match status" value="1"/>
</dbReference>
<dbReference type="Pfam" id="PF02824">
    <property type="entry name" value="TGS"/>
    <property type="match status" value="1"/>
</dbReference>
<dbReference type="Pfam" id="PF00587">
    <property type="entry name" value="tRNA-synt_2b"/>
    <property type="match status" value="1"/>
</dbReference>
<dbReference type="Pfam" id="PF07973">
    <property type="entry name" value="tRNA_SAD"/>
    <property type="match status" value="1"/>
</dbReference>
<dbReference type="PRINTS" id="PR01047">
    <property type="entry name" value="TRNASYNTHTHR"/>
</dbReference>
<dbReference type="SMART" id="SM00863">
    <property type="entry name" value="tRNA_SAD"/>
    <property type="match status" value="1"/>
</dbReference>
<dbReference type="SUPFAM" id="SSF52954">
    <property type="entry name" value="Class II aaRS ABD-related"/>
    <property type="match status" value="1"/>
</dbReference>
<dbReference type="SUPFAM" id="SSF55681">
    <property type="entry name" value="Class II aaRS and biotin synthetases"/>
    <property type="match status" value="1"/>
</dbReference>
<dbReference type="SUPFAM" id="SSF81271">
    <property type="entry name" value="TGS-like"/>
    <property type="match status" value="1"/>
</dbReference>
<dbReference type="SUPFAM" id="SSF55186">
    <property type="entry name" value="ThrRS/AlaRS common domain"/>
    <property type="match status" value="1"/>
</dbReference>
<dbReference type="PROSITE" id="PS50862">
    <property type="entry name" value="AA_TRNA_LIGASE_II"/>
    <property type="match status" value="1"/>
</dbReference>
<dbReference type="PROSITE" id="PS51880">
    <property type="entry name" value="TGS"/>
    <property type="match status" value="1"/>
</dbReference>
<evidence type="ECO:0000255" key="1">
    <source>
        <dbReference type="HAMAP-Rule" id="MF_00184"/>
    </source>
</evidence>
<evidence type="ECO:0000255" key="2">
    <source>
        <dbReference type="PROSITE-ProRule" id="PRU01228"/>
    </source>
</evidence>
<reference key="1">
    <citation type="journal article" date="2006" name="Genome Res.">
        <title>Skewed genomic variability in strains of the toxigenic bacterial pathogen, Clostridium perfringens.</title>
        <authorList>
            <person name="Myers G.S.A."/>
            <person name="Rasko D.A."/>
            <person name="Cheung J.K."/>
            <person name="Ravel J."/>
            <person name="Seshadri R."/>
            <person name="DeBoy R.T."/>
            <person name="Ren Q."/>
            <person name="Varga J."/>
            <person name="Awad M.M."/>
            <person name="Brinkac L.M."/>
            <person name="Daugherty S.C."/>
            <person name="Haft D.H."/>
            <person name="Dodson R.J."/>
            <person name="Madupu R."/>
            <person name="Nelson W.C."/>
            <person name="Rosovitz M.J."/>
            <person name="Sullivan S.A."/>
            <person name="Khouri H."/>
            <person name="Dimitrov G.I."/>
            <person name="Watkins K.L."/>
            <person name="Mulligan S."/>
            <person name="Benton J."/>
            <person name="Radune D."/>
            <person name="Fisher D.J."/>
            <person name="Atkins H.S."/>
            <person name="Hiscox T."/>
            <person name="Jost B.H."/>
            <person name="Billington S.J."/>
            <person name="Songer J.G."/>
            <person name="McClane B.A."/>
            <person name="Titball R.W."/>
            <person name="Rood J.I."/>
            <person name="Melville S.B."/>
            <person name="Paulsen I.T."/>
        </authorList>
    </citation>
    <scope>NUCLEOTIDE SEQUENCE [LARGE SCALE GENOMIC DNA]</scope>
    <source>
        <strain>ATCC 13124 / DSM 756 / JCM 1290 / NCIMB 6125 / NCTC 8237 / S 107 / Type A</strain>
    </source>
</reference>
<name>SYT_CLOP1</name>
<protein>
    <recommendedName>
        <fullName evidence="1">Threonine--tRNA ligase</fullName>
        <ecNumber evidence="1">6.1.1.3</ecNumber>
    </recommendedName>
    <alternativeName>
        <fullName evidence="1">Threonyl-tRNA synthetase</fullName>
        <shortName evidence="1">ThrRS</shortName>
    </alternativeName>
</protein>
<feature type="chain" id="PRO_1000020373" description="Threonine--tRNA ligase">
    <location>
        <begin position="1"/>
        <end position="643"/>
    </location>
</feature>
<feature type="domain" description="TGS" evidence="2">
    <location>
        <begin position="1"/>
        <end position="61"/>
    </location>
</feature>
<feature type="region of interest" description="Catalytic" evidence="1">
    <location>
        <begin position="240"/>
        <end position="540"/>
    </location>
</feature>
<feature type="binding site" evidence="1">
    <location>
        <position position="335"/>
    </location>
    <ligand>
        <name>Zn(2+)</name>
        <dbReference type="ChEBI" id="CHEBI:29105"/>
    </ligand>
</feature>
<feature type="binding site" evidence="1">
    <location>
        <position position="386"/>
    </location>
    <ligand>
        <name>Zn(2+)</name>
        <dbReference type="ChEBI" id="CHEBI:29105"/>
    </ligand>
</feature>
<feature type="binding site" evidence="1">
    <location>
        <position position="517"/>
    </location>
    <ligand>
        <name>Zn(2+)</name>
        <dbReference type="ChEBI" id="CHEBI:29105"/>
    </ligand>
</feature>
<organism>
    <name type="scientific">Clostridium perfringens (strain ATCC 13124 / DSM 756 / JCM 1290 / NCIMB 6125 / NCTC 8237 / Type A)</name>
    <dbReference type="NCBI Taxonomy" id="195103"/>
    <lineage>
        <taxon>Bacteria</taxon>
        <taxon>Bacillati</taxon>
        <taxon>Bacillota</taxon>
        <taxon>Clostridia</taxon>
        <taxon>Eubacteriales</taxon>
        <taxon>Clostridiaceae</taxon>
        <taxon>Clostridium</taxon>
    </lineage>
</organism>
<proteinExistence type="inferred from homology"/>